<accession>P55471</accession>
<reference key="1">
    <citation type="journal article" date="1997" name="Nature">
        <title>Molecular basis of symbiosis between Rhizobium and legumes.</title>
        <authorList>
            <person name="Freiberg C.A."/>
            <person name="Fellay R."/>
            <person name="Bairoch A."/>
            <person name="Broughton W.J."/>
            <person name="Rosenthal A."/>
            <person name="Perret X."/>
        </authorList>
    </citation>
    <scope>NUCLEOTIDE SEQUENCE [LARGE SCALE GENOMIC DNA]</scope>
    <source>
        <strain>NBRC 101917 / NGR234</strain>
    </source>
</reference>
<reference key="2">
    <citation type="journal article" date="2009" name="Appl. Environ. Microbiol.">
        <title>Rhizobium sp. strain NGR234 possesses a remarkable number of secretion systems.</title>
        <authorList>
            <person name="Schmeisser C."/>
            <person name="Liesegang H."/>
            <person name="Krysciak D."/>
            <person name="Bakkou N."/>
            <person name="Le Quere A."/>
            <person name="Wollherr A."/>
            <person name="Heinemeyer I."/>
            <person name="Morgenstern B."/>
            <person name="Pommerening-Roeser A."/>
            <person name="Flores M."/>
            <person name="Palacios R."/>
            <person name="Brenner S."/>
            <person name="Gottschalk G."/>
            <person name="Schmitz R.A."/>
            <person name="Broughton W.J."/>
            <person name="Perret X."/>
            <person name="Strittmatter A.W."/>
            <person name="Streit W.R."/>
        </authorList>
    </citation>
    <scope>NUCLEOTIDE SEQUENCE [LARGE SCALE GENOMIC DNA]</scope>
    <source>
        <strain>NBRC 101917 / NGR234</strain>
    </source>
</reference>
<proteinExistence type="inferred from homology"/>
<geneLocation type="plasmid">
    <name>sym pNGR234a</name>
</geneLocation>
<sequence length="367" mass="38079">MKSRLQVRSAHVPLWSWIIPLFGCVIAAMTLAHVLPERSVVLLLMSAGLLTGAVFASVHHAEILAARVGQPSGAILLAVCVTIIEVAIIGSLMLSGAEGNEEVARDTVFAAVMIVLNGVIGLCLVLGGRRHREQSFQLNAASAALAVLGTLATLSLVLPNFVTAGKPQQFAAIQLVVIGLVSVVLYGVFLFVQTVRHRDYFIDDEDAASPPATHETPRNPLAAGALLVLALIAVILLAMLLSYPLDSAVEALGLPQAVVGVTIAGVVLLPEGITSVKAALMNRLQNSINLVLGSALASIGVTIPVVAAISVALGRDLALGLAPQNLIMLILTLFVGTITLGTGRTTVLQGAVHLAIFTVFLLLSAIP</sequence>
<name>Y4HA_SINFN</name>
<comment type="function">
    <text>Possible cation transporter.</text>
</comment>
<comment type="subcellular location">
    <subcellularLocation>
        <location evidence="2">Cell membrane</location>
        <topology evidence="2">Multi-pass membrane protein</topology>
    </subcellularLocation>
</comment>
<comment type="similarity">
    <text evidence="2">Belongs to the Ca(2+):cation antiporter (CaCA) (TC 2.A.19) family.</text>
</comment>
<protein>
    <recommendedName>
        <fullName>Putative ionic transporter y4hA</fullName>
    </recommendedName>
</protein>
<organism>
    <name type="scientific">Sinorhizobium fredii (strain NBRC 101917 / NGR234)</name>
    <dbReference type="NCBI Taxonomy" id="394"/>
    <lineage>
        <taxon>Bacteria</taxon>
        <taxon>Pseudomonadati</taxon>
        <taxon>Pseudomonadota</taxon>
        <taxon>Alphaproteobacteria</taxon>
        <taxon>Hyphomicrobiales</taxon>
        <taxon>Rhizobiaceae</taxon>
        <taxon>Sinorhizobium/Ensifer group</taxon>
        <taxon>Sinorhizobium</taxon>
    </lineage>
</organism>
<feature type="chain" id="PRO_0000209508" description="Putative ionic transporter y4hA">
    <location>
        <begin position="1"/>
        <end position="367"/>
    </location>
</feature>
<feature type="transmembrane region" description="Helical" evidence="1">
    <location>
        <begin position="12"/>
        <end position="32"/>
    </location>
</feature>
<feature type="transmembrane region" description="Helical" evidence="1">
    <location>
        <begin position="39"/>
        <end position="59"/>
    </location>
</feature>
<feature type="transmembrane region" description="Helical" evidence="1">
    <location>
        <begin position="74"/>
        <end position="94"/>
    </location>
</feature>
<feature type="transmembrane region" description="Helical" evidence="1">
    <location>
        <begin position="108"/>
        <end position="128"/>
    </location>
</feature>
<feature type="transmembrane region" description="Helical" evidence="1">
    <location>
        <begin position="143"/>
        <end position="163"/>
    </location>
</feature>
<feature type="transmembrane region" description="Helical" evidence="1">
    <location>
        <begin position="172"/>
        <end position="192"/>
    </location>
</feature>
<feature type="transmembrane region" description="Helical" evidence="1">
    <location>
        <begin position="221"/>
        <end position="241"/>
    </location>
</feature>
<feature type="transmembrane region" description="Helical" evidence="1">
    <location>
        <begin position="249"/>
        <end position="269"/>
    </location>
</feature>
<feature type="transmembrane region" description="Helical" evidence="1">
    <location>
        <begin position="291"/>
        <end position="311"/>
    </location>
</feature>
<feature type="transmembrane region" description="Helical" evidence="1">
    <location>
        <begin position="318"/>
        <end position="338"/>
    </location>
</feature>
<feature type="transmembrane region" description="Helical" evidence="1">
    <location>
        <begin position="347"/>
        <end position="367"/>
    </location>
</feature>
<evidence type="ECO:0000255" key="1"/>
<evidence type="ECO:0000305" key="2"/>
<gene>
    <name type="ordered locus">NGR_a03490</name>
    <name type="ORF">y4hA</name>
</gene>
<dbReference type="EMBL" id="U00090">
    <property type="protein sequence ID" value="AAB91689.1"/>
    <property type="molecule type" value="Genomic_DNA"/>
</dbReference>
<dbReference type="RefSeq" id="NP_443877.1">
    <property type="nucleotide sequence ID" value="NC_000914.2"/>
</dbReference>
<dbReference type="RefSeq" id="WP_010875363.1">
    <property type="nucleotide sequence ID" value="NC_000914.2"/>
</dbReference>
<dbReference type="SMR" id="P55471"/>
<dbReference type="KEGG" id="rhi:NGR_a03490"/>
<dbReference type="PATRIC" id="fig|394.7.peg.357"/>
<dbReference type="eggNOG" id="COG0387">
    <property type="taxonomic scope" value="Bacteria"/>
</dbReference>
<dbReference type="HOGENOM" id="CLU_050648_1_0_5"/>
<dbReference type="OrthoDB" id="9787814at2"/>
<dbReference type="Proteomes" id="UP000001054">
    <property type="component" value="Plasmid pNGR234a"/>
</dbReference>
<dbReference type="GO" id="GO:0005886">
    <property type="term" value="C:plasma membrane"/>
    <property type="evidence" value="ECO:0007669"/>
    <property type="project" value="UniProtKB-SubCell"/>
</dbReference>
<dbReference type="GO" id="GO:0015386">
    <property type="term" value="F:potassium:proton antiporter activity"/>
    <property type="evidence" value="ECO:0007669"/>
    <property type="project" value="TreeGrafter"/>
</dbReference>
<dbReference type="GO" id="GO:0015385">
    <property type="term" value="F:sodium:proton antiporter activity"/>
    <property type="evidence" value="ECO:0007669"/>
    <property type="project" value="TreeGrafter"/>
</dbReference>
<dbReference type="InterPro" id="IPR052946">
    <property type="entry name" value="Alkaline_pH_Ca-Antiporter"/>
</dbReference>
<dbReference type="InterPro" id="IPR004837">
    <property type="entry name" value="NaCa_Exmemb"/>
</dbReference>
<dbReference type="NCBIfam" id="TIGR00846">
    <property type="entry name" value="caca2"/>
    <property type="match status" value="1"/>
</dbReference>
<dbReference type="PANTHER" id="PTHR37958">
    <property type="entry name" value="SODIUM-POTASSIUM/PROTON ANTIPORTER CHAA"/>
    <property type="match status" value="1"/>
</dbReference>
<dbReference type="PANTHER" id="PTHR37958:SF1">
    <property type="entry name" value="SODIUM-POTASSIUM_PROTON ANTIPORTER CHAA"/>
    <property type="match status" value="1"/>
</dbReference>
<dbReference type="Pfam" id="PF01699">
    <property type="entry name" value="Na_Ca_ex"/>
    <property type="match status" value="2"/>
</dbReference>
<keyword id="KW-1003">Cell membrane</keyword>
<keyword id="KW-0406">Ion transport</keyword>
<keyword id="KW-0472">Membrane</keyword>
<keyword id="KW-0614">Plasmid</keyword>
<keyword id="KW-1185">Reference proteome</keyword>
<keyword id="KW-0812">Transmembrane</keyword>
<keyword id="KW-1133">Transmembrane helix</keyword>
<keyword id="KW-0813">Transport</keyword>